<sequence>MTASTEGQARYGQSVKGLLTEKVSTCGADVIALTKQVLKGSHSSELLGQAARNMVMQEDSILHSEDSLRKMAIITTHLQYQQEAIQKNVEQSSNLQDQLKHLLK</sequence>
<gene>
    <name evidence="1" type="primary">borcs7</name>
    <name evidence="3" type="ORF">TEgg007d17.1</name>
</gene>
<reference key="1">
    <citation type="submission" date="2006-10" db="EMBL/GenBank/DDBJ databases">
        <authorList>
            <consortium name="Sanger Xenopus tropicalis EST/cDNA project"/>
        </authorList>
    </citation>
    <scope>NUCLEOTIDE SEQUENCE [LARGE SCALE MRNA]</scope>
    <source>
        <tissue>Egg</tissue>
    </source>
</reference>
<reference key="2">
    <citation type="submission" date="2005-03" db="EMBL/GenBank/DDBJ databases">
        <authorList>
            <consortium name="NIH - Xenopus Gene Collection (XGC) project"/>
        </authorList>
    </citation>
    <scope>NUCLEOTIDE SEQUENCE [LARGE SCALE MRNA]</scope>
    <source>
        <tissue>Embryo</tissue>
    </source>
</reference>
<comment type="function">
    <text evidence="1">As part of a BORC-like complex may play a role in lysosomes movement and localization at the cell periphery. Associated with the cytosolic face of lysosomes, this complex may couple lysosomes to microtubule plus-end-directed kinesin motor.</text>
</comment>
<comment type="subcellular location">
    <subcellularLocation>
        <location evidence="1">Lysosome membrane</location>
    </subcellularLocation>
</comment>
<comment type="similarity">
    <text evidence="2">Belongs to the BORCS7 family.</text>
</comment>
<comment type="sequence caution" evidence="2">
    <conflict type="erroneous initiation">
        <sequence resource="EMBL-CDS" id="AAH91604"/>
    </conflict>
    <text>Extended N-terminus.</text>
</comment>
<organism>
    <name type="scientific">Xenopus tropicalis</name>
    <name type="common">Western clawed frog</name>
    <name type="synonym">Silurana tropicalis</name>
    <dbReference type="NCBI Taxonomy" id="8364"/>
    <lineage>
        <taxon>Eukaryota</taxon>
        <taxon>Metazoa</taxon>
        <taxon>Chordata</taxon>
        <taxon>Craniata</taxon>
        <taxon>Vertebrata</taxon>
        <taxon>Euteleostomi</taxon>
        <taxon>Amphibia</taxon>
        <taxon>Batrachia</taxon>
        <taxon>Anura</taxon>
        <taxon>Pipoidea</taxon>
        <taxon>Pipidae</taxon>
        <taxon>Xenopodinae</taxon>
        <taxon>Xenopus</taxon>
        <taxon>Silurana</taxon>
    </lineage>
</organism>
<keyword id="KW-0458">Lysosome</keyword>
<keyword id="KW-0472">Membrane</keyword>
<keyword id="KW-1185">Reference proteome</keyword>
<feature type="chain" id="PRO_0000359788" description="BLOC-1-related complex subunit 7">
    <location>
        <begin position="1"/>
        <end position="104"/>
    </location>
</feature>
<protein>
    <recommendedName>
        <fullName evidence="2">BLOC-1-related complex subunit 7</fullName>
    </recommendedName>
</protein>
<accession>Q28DH3</accession>
<accession>Q5BJ66</accession>
<evidence type="ECO:0000250" key="1">
    <source>
        <dbReference type="UniProtKB" id="Q96B45"/>
    </source>
</evidence>
<evidence type="ECO:0000305" key="2"/>
<evidence type="ECO:0000312" key="3">
    <source>
        <dbReference type="EMBL" id="CAJ82123.1"/>
    </source>
</evidence>
<dbReference type="EMBL" id="CR855513">
    <property type="protein sequence ID" value="CAJ82123.1"/>
    <property type="molecule type" value="mRNA"/>
</dbReference>
<dbReference type="EMBL" id="BC091604">
    <property type="protein sequence ID" value="AAH91604.1"/>
    <property type="status" value="ALT_INIT"/>
    <property type="molecule type" value="mRNA"/>
</dbReference>
<dbReference type="RefSeq" id="NP_001016829.1">
    <property type="nucleotide sequence ID" value="NM_001016829.3"/>
</dbReference>
<dbReference type="SMR" id="Q28DH3"/>
<dbReference type="FunCoup" id="Q28DH3">
    <property type="interactions" value="90"/>
</dbReference>
<dbReference type="STRING" id="8364.ENSXETP00000004077"/>
<dbReference type="DNASU" id="549583"/>
<dbReference type="GeneID" id="549583"/>
<dbReference type="KEGG" id="xtr:549583"/>
<dbReference type="CTD" id="119032"/>
<dbReference type="InParanoid" id="Q28DH3"/>
<dbReference type="OrthoDB" id="5567844at2759"/>
<dbReference type="Proteomes" id="UP000008143">
    <property type="component" value="Chromosome 7"/>
</dbReference>
<dbReference type="GO" id="GO:0099078">
    <property type="term" value="C:BORC complex"/>
    <property type="evidence" value="ECO:0000250"/>
    <property type="project" value="UniProtKB"/>
</dbReference>
<dbReference type="GO" id="GO:0005765">
    <property type="term" value="C:lysosomal membrane"/>
    <property type="evidence" value="ECO:0007669"/>
    <property type="project" value="UniProtKB-SubCell"/>
</dbReference>
<dbReference type="InterPro" id="IPR032143">
    <property type="entry name" value="BORCS7"/>
</dbReference>
<dbReference type="PANTHER" id="PTHR31397:SF1">
    <property type="entry name" value="BLOC-1-RELATED COMPLEX SUBUNIT 7"/>
    <property type="match status" value="1"/>
</dbReference>
<dbReference type="PANTHER" id="PTHR31397">
    <property type="entry name" value="BLOC-1-RELATED COMPLEX SUBUNIT 7 BORSC7"/>
    <property type="match status" value="1"/>
</dbReference>
<dbReference type="Pfam" id="PF16088">
    <property type="entry name" value="BORCS7"/>
    <property type="match status" value="1"/>
</dbReference>
<proteinExistence type="inferred from homology"/>
<name>BORC7_XENTR</name>